<name>RF3_PSEPK</name>
<feature type="chain" id="PRO_0000210956" description="Peptide chain release factor 3">
    <location>
        <begin position="1"/>
        <end position="527"/>
    </location>
</feature>
<feature type="domain" description="tr-type G">
    <location>
        <begin position="9"/>
        <end position="277"/>
    </location>
</feature>
<feature type="binding site" evidence="1">
    <location>
        <begin position="18"/>
        <end position="25"/>
    </location>
    <ligand>
        <name>GTP</name>
        <dbReference type="ChEBI" id="CHEBI:37565"/>
    </ligand>
</feature>
<feature type="binding site" evidence="1">
    <location>
        <begin position="86"/>
        <end position="90"/>
    </location>
    <ligand>
        <name>GTP</name>
        <dbReference type="ChEBI" id="CHEBI:37565"/>
    </ligand>
</feature>
<feature type="binding site" evidence="1">
    <location>
        <begin position="140"/>
        <end position="143"/>
    </location>
    <ligand>
        <name>GTP</name>
        <dbReference type="ChEBI" id="CHEBI:37565"/>
    </ligand>
</feature>
<accession>Q88PH8</accession>
<keyword id="KW-0963">Cytoplasm</keyword>
<keyword id="KW-0342">GTP-binding</keyword>
<keyword id="KW-0547">Nucleotide-binding</keyword>
<keyword id="KW-0648">Protein biosynthesis</keyword>
<keyword id="KW-1185">Reference proteome</keyword>
<organism>
    <name type="scientific">Pseudomonas putida (strain ATCC 47054 / DSM 6125 / CFBP 8728 / NCIMB 11950 / KT2440)</name>
    <dbReference type="NCBI Taxonomy" id="160488"/>
    <lineage>
        <taxon>Bacteria</taxon>
        <taxon>Pseudomonadati</taxon>
        <taxon>Pseudomonadota</taxon>
        <taxon>Gammaproteobacteria</taxon>
        <taxon>Pseudomonadales</taxon>
        <taxon>Pseudomonadaceae</taxon>
        <taxon>Pseudomonas</taxon>
    </lineage>
</organism>
<comment type="function">
    <text evidence="1">Increases the formation of ribosomal termination complexes and stimulates activities of RF-1 and RF-2. It binds guanine nucleotides and has strong preference for UGA stop codons. It may interact directly with the ribosome. The stimulation of RF-1 and RF-2 is significantly reduced by GTP and GDP, but not by GMP.</text>
</comment>
<comment type="subcellular location">
    <subcellularLocation>
        <location evidence="1">Cytoplasm</location>
    </subcellularLocation>
</comment>
<comment type="similarity">
    <text evidence="1">Belongs to the TRAFAC class translation factor GTPase superfamily. Classic translation factor GTPase family. PrfC subfamily.</text>
</comment>
<reference key="1">
    <citation type="journal article" date="2002" name="Environ. Microbiol.">
        <title>Complete genome sequence and comparative analysis of the metabolically versatile Pseudomonas putida KT2440.</title>
        <authorList>
            <person name="Nelson K.E."/>
            <person name="Weinel C."/>
            <person name="Paulsen I.T."/>
            <person name="Dodson R.J."/>
            <person name="Hilbert H."/>
            <person name="Martins dos Santos V.A.P."/>
            <person name="Fouts D.E."/>
            <person name="Gill S.R."/>
            <person name="Pop M."/>
            <person name="Holmes M."/>
            <person name="Brinkac L.M."/>
            <person name="Beanan M.J."/>
            <person name="DeBoy R.T."/>
            <person name="Daugherty S.C."/>
            <person name="Kolonay J.F."/>
            <person name="Madupu R."/>
            <person name="Nelson W.C."/>
            <person name="White O."/>
            <person name="Peterson J.D."/>
            <person name="Khouri H.M."/>
            <person name="Hance I."/>
            <person name="Chris Lee P."/>
            <person name="Holtzapple E.K."/>
            <person name="Scanlan D."/>
            <person name="Tran K."/>
            <person name="Moazzez A."/>
            <person name="Utterback T.R."/>
            <person name="Rizzo M."/>
            <person name="Lee K."/>
            <person name="Kosack D."/>
            <person name="Moestl D."/>
            <person name="Wedler H."/>
            <person name="Lauber J."/>
            <person name="Stjepandic D."/>
            <person name="Hoheisel J."/>
            <person name="Straetz M."/>
            <person name="Heim S."/>
            <person name="Kiewitz C."/>
            <person name="Eisen J.A."/>
            <person name="Timmis K.N."/>
            <person name="Duesterhoeft A."/>
            <person name="Tuemmler B."/>
            <person name="Fraser C.M."/>
        </authorList>
    </citation>
    <scope>NUCLEOTIDE SEQUENCE [LARGE SCALE GENOMIC DNA]</scope>
    <source>
        <strain>ATCC 47054 / DSM 6125 / CFBP 8728 / NCIMB 11950 / KT2440</strain>
    </source>
</reference>
<dbReference type="EMBL" id="AE015451">
    <property type="protein sequence ID" value="AAN66497.1"/>
    <property type="molecule type" value="Genomic_DNA"/>
</dbReference>
<dbReference type="RefSeq" id="NP_743033.1">
    <property type="nucleotide sequence ID" value="NC_002947.4"/>
</dbReference>
<dbReference type="RefSeq" id="WP_003248481.1">
    <property type="nucleotide sequence ID" value="NZ_CP169744.1"/>
</dbReference>
<dbReference type="SMR" id="Q88PH8"/>
<dbReference type="STRING" id="160488.PP_0872"/>
<dbReference type="PaxDb" id="160488-PP_0872"/>
<dbReference type="KEGG" id="ppu:PP_0872"/>
<dbReference type="PATRIC" id="fig|160488.4.peg.933"/>
<dbReference type="eggNOG" id="COG4108">
    <property type="taxonomic scope" value="Bacteria"/>
</dbReference>
<dbReference type="HOGENOM" id="CLU_002794_2_1_6"/>
<dbReference type="OrthoDB" id="9801472at2"/>
<dbReference type="PhylomeDB" id="Q88PH8"/>
<dbReference type="BioCyc" id="PPUT160488:G1G01-947-MONOMER"/>
<dbReference type="Proteomes" id="UP000000556">
    <property type="component" value="Chromosome"/>
</dbReference>
<dbReference type="GO" id="GO:0005829">
    <property type="term" value="C:cytosol"/>
    <property type="evidence" value="ECO:0007669"/>
    <property type="project" value="TreeGrafter"/>
</dbReference>
<dbReference type="GO" id="GO:0005525">
    <property type="term" value="F:GTP binding"/>
    <property type="evidence" value="ECO:0007669"/>
    <property type="project" value="UniProtKB-UniRule"/>
</dbReference>
<dbReference type="GO" id="GO:0003924">
    <property type="term" value="F:GTPase activity"/>
    <property type="evidence" value="ECO:0007669"/>
    <property type="project" value="InterPro"/>
</dbReference>
<dbReference type="GO" id="GO:0097216">
    <property type="term" value="F:guanosine tetraphosphate binding"/>
    <property type="evidence" value="ECO:0007669"/>
    <property type="project" value="UniProtKB-ARBA"/>
</dbReference>
<dbReference type="GO" id="GO:0016150">
    <property type="term" value="F:translation release factor activity, codon nonspecific"/>
    <property type="evidence" value="ECO:0007669"/>
    <property type="project" value="TreeGrafter"/>
</dbReference>
<dbReference type="GO" id="GO:0016149">
    <property type="term" value="F:translation release factor activity, codon specific"/>
    <property type="evidence" value="ECO:0007669"/>
    <property type="project" value="UniProtKB-UniRule"/>
</dbReference>
<dbReference type="GO" id="GO:0006449">
    <property type="term" value="P:regulation of translational termination"/>
    <property type="evidence" value="ECO:0007669"/>
    <property type="project" value="UniProtKB-UniRule"/>
</dbReference>
<dbReference type="CDD" id="cd04169">
    <property type="entry name" value="RF3"/>
    <property type="match status" value="1"/>
</dbReference>
<dbReference type="CDD" id="cd03689">
    <property type="entry name" value="RF3_II"/>
    <property type="match status" value="1"/>
</dbReference>
<dbReference type="CDD" id="cd16259">
    <property type="entry name" value="RF3_III"/>
    <property type="match status" value="1"/>
</dbReference>
<dbReference type="FunFam" id="2.40.30.10:FF:000040">
    <property type="entry name" value="Peptide chain release factor 3"/>
    <property type="match status" value="1"/>
</dbReference>
<dbReference type="FunFam" id="3.30.70.3280:FF:000001">
    <property type="entry name" value="Peptide chain release factor 3"/>
    <property type="match status" value="1"/>
</dbReference>
<dbReference type="FunFam" id="3.40.50.300:FF:000542">
    <property type="entry name" value="Peptide chain release factor 3"/>
    <property type="match status" value="1"/>
</dbReference>
<dbReference type="Gene3D" id="3.40.50.300">
    <property type="entry name" value="P-loop containing nucleotide triphosphate hydrolases"/>
    <property type="match status" value="2"/>
</dbReference>
<dbReference type="Gene3D" id="3.30.70.3280">
    <property type="entry name" value="Peptide chain release factor 3, domain III"/>
    <property type="match status" value="1"/>
</dbReference>
<dbReference type="HAMAP" id="MF_00072">
    <property type="entry name" value="Rel_fac_3"/>
    <property type="match status" value="1"/>
</dbReference>
<dbReference type="InterPro" id="IPR053905">
    <property type="entry name" value="EF-G-like_DII"/>
</dbReference>
<dbReference type="InterPro" id="IPR035647">
    <property type="entry name" value="EFG_III/V"/>
</dbReference>
<dbReference type="InterPro" id="IPR031157">
    <property type="entry name" value="G_TR_CS"/>
</dbReference>
<dbReference type="InterPro" id="IPR027417">
    <property type="entry name" value="P-loop_NTPase"/>
</dbReference>
<dbReference type="InterPro" id="IPR004548">
    <property type="entry name" value="PrfC"/>
</dbReference>
<dbReference type="InterPro" id="IPR032090">
    <property type="entry name" value="RF3_C"/>
</dbReference>
<dbReference type="InterPro" id="IPR038467">
    <property type="entry name" value="RF3_dom_3_sf"/>
</dbReference>
<dbReference type="InterPro" id="IPR041732">
    <property type="entry name" value="RF3_GTP-bd"/>
</dbReference>
<dbReference type="InterPro" id="IPR005225">
    <property type="entry name" value="Small_GTP-bd"/>
</dbReference>
<dbReference type="InterPro" id="IPR000795">
    <property type="entry name" value="T_Tr_GTP-bd_dom"/>
</dbReference>
<dbReference type="InterPro" id="IPR009000">
    <property type="entry name" value="Transl_B-barrel_sf"/>
</dbReference>
<dbReference type="NCBIfam" id="TIGR00503">
    <property type="entry name" value="prfC"/>
    <property type="match status" value="1"/>
</dbReference>
<dbReference type="NCBIfam" id="NF001964">
    <property type="entry name" value="PRK00741.1"/>
    <property type="match status" value="1"/>
</dbReference>
<dbReference type="NCBIfam" id="TIGR00231">
    <property type="entry name" value="small_GTP"/>
    <property type="match status" value="1"/>
</dbReference>
<dbReference type="PANTHER" id="PTHR43556">
    <property type="entry name" value="PEPTIDE CHAIN RELEASE FACTOR RF3"/>
    <property type="match status" value="1"/>
</dbReference>
<dbReference type="PANTHER" id="PTHR43556:SF2">
    <property type="entry name" value="PEPTIDE CHAIN RELEASE FACTOR RF3"/>
    <property type="match status" value="1"/>
</dbReference>
<dbReference type="Pfam" id="PF22042">
    <property type="entry name" value="EF-G_D2"/>
    <property type="match status" value="1"/>
</dbReference>
<dbReference type="Pfam" id="PF00009">
    <property type="entry name" value="GTP_EFTU"/>
    <property type="match status" value="1"/>
</dbReference>
<dbReference type="Pfam" id="PF16658">
    <property type="entry name" value="RF3_C"/>
    <property type="match status" value="1"/>
</dbReference>
<dbReference type="PRINTS" id="PR00315">
    <property type="entry name" value="ELONGATNFCT"/>
</dbReference>
<dbReference type="SUPFAM" id="SSF54980">
    <property type="entry name" value="EF-G C-terminal domain-like"/>
    <property type="match status" value="1"/>
</dbReference>
<dbReference type="SUPFAM" id="SSF52540">
    <property type="entry name" value="P-loop containing nucleoside triphosphate hydrolases"/>
    <property type="match status" value="1"/>
</dbReference>
<dbReference type="SUPFAM" id="SSF50447">
    <property type="entry name" value="Translation proteins"/>
    <property type="match status" value="1"/>
</dbReference>
<dbReference type="PROSITE" id="PS00301">
    <property type="entry name" value="G_TR_1"/>
    <property type="match status" value="1"/>
</dbReference>
<dbReference type="PROSITE" id="PS51722">
    <property type="entry name" value="G_TR_2"/>
    <property type="match status" value="1"/>
</dbReference>
<gene>
    <name evidence="1" type="primary">prfC</name>
    <name type="ordered locus">PP_0872</name>
</gene>
<evidence type="ECO:0000255" key="1">
    <source>
        <dbReference type="HAMAP-Rule" id="MF_00072"/>
    </source>
</evidence>
<protein>
    <recommendedName>
        <fullName evidence="1">Peptide chain release factor 3</fullName>
        <shortName evidence="1">RF-3</shortName>
    </recommendedName>
</protein>
<proteinExistence type="inferred from homology"/>
<sequence length="527" mass="59713">MTNQAAEVAKRRTFAIISHPDAGKTTITEKLLLMGKAIAVAGTVKSRKSDRHATSDWMEMEKQRGISITTSVMQFPYREHMINLLDTPGHEDFSEDTYRTLTAVDSALMVLDGGKGVEPRTIALMDVCRLRDTPIVSFINKLDRDIRDPIELLDEIEAVLKIKAAPITWPIGCYRDFKGVYHLTGDYIVVYTPGHGHERTEAKIIQKLDSDEARAHLGDQYDSFVEQLELVQGACHEFNQEEFINGQLTPVFFGTALGNFGVDHVLDAVVDWAPRPLGRVAHERTVEPVEEKFTGFVFKIQANMDPKHRDRIAFMRICSGKYEKGMKMRHVRLNKDLRIGDALTFFSSEREQLEEAFAGDIIGLHNHGTIQIGDTFTEGEALGFTGIPHFAPELFRRVRLKDPLKSKQLRQGLQQLAEEGATQVFFPERSNDIILGAVGVLQFDVVASRLKEEYKVECAYEPITVWSARWISCDDKKKLEEFQTKAMENLAIDGGGHLTYLAPTRVNLALMEERWPDIKFRATREHH</sequence>